<organism>
    <name type="scientific">Anaeromyxobacter sp. (strain K)</name>
    <dbReference type="NCBI Taxonomy" id="447217"/>
    <lineage>
        <taxon>Bacteria</taxon>
        <taxon>Pseudomonadati</taxon>
        <taxon>Myxococcota</taxon>
        <taxon>Myxococcia</taxon>
        <taxon>Myxococcales</taxon>
        <taxon>Cystobacterineae</taxon>
        <taxon>Anaeromyxobacteraceae</taxon>
        <taxon>Anaeromyxobacter</taxon>
    </lineage>
</organism>
<evidence type="ECO:0000255" key="1">
    <source>
        <dbReference type="HAMAP-Rule" id="MF_00071"/>
    </source>
</evidence>
<comment type="function">
    <text evidence="1">Required for accurate and efficient protein synthesis under certain stress conditions. May act as a fidelity factor of the translation reaction, by catalyzing a one-codon backward translocation of tRNAs on improperly translocated ribosomes. Back-translocation proceeds from a post-translocation (POST) complex to a pre-translocation (PRE) complex, thus giving elongation factor G a second chance to translocate the tRNAs correctly. Binds to ribosomes in a GTP-dependent manner.</text>
</comment>
<comment type="catalytic activity">
    <reaction evidence="1">
        <text>GTP + H2O = GDP + phosphate + H(+)</text>
        <dbReference type="Rhea" id="RHEA:19669"/>
        <dbReference type="ChEBI" id="CHEBI:15377"/>
        <dbReference type="ChEBI" id="CHEBI:15378"/>
        <dbReference type="ChEBI" id="CHEBI:37565"/>
        <dbReference type="ChEBI" id="CHEBI:43474"/>
        <dbReference type="ChEBI" id="CHEBI:58189"/>
        <dbReference type="EC" id="3.6.5.n1"/>
    </reaction>
</comment>
<comment type="subcellular location">
    <subcellularLocation>
        <location evidence="1">Cell inner membrane</location>
        <topology evidence="1">Peripheral membrane protein</topology>
        <orientation evidence="1">Cytoplasmic side</orientation>
    </subcellularLocation>
</comment>
<comment type="similarity">
    <text evidence="1">Belongs to the TRAFAC class translation factor GTPase superfamily. Classic translation factor GTPase family. LepA subfamily.</text>
</comment>
<feature type="chain" id="PRO_1000092371" description="Elongation factor 4">
    <location>
        <begin position="1"/>
        <end position="601"/>
    </location>
</feature>
<feature type="domain" description="tr-type G">
    <location>
        <begin position="6"/>
        <end position="188"/>
    </location>
</feature>
<feature type="binding site" evidence="1">
    <location>
        <begin position="18"/>
        <end position="23"/>
    </location>
    <ligand>
        <name>GTP</name>
        <dbReference type="ChEBI" id="CHEBI:37565"/>
    </ligand>
</feature>
<feature type="binding site" evidence="1">
    <location>
        <begin position="135"/>
        <end position="138"/>
    </location>
    <ligand>
        <name>GTP</name>
        <dbReference type="ChEBI" id="CHEBI:37565"/>
    </ligand>
</feature>
<sequence>MAEKNSHIRNFSIIAHIDHGKSTLADRLLEHTGTVTKREAQAQFLDNMELERERGITIKAQTVRMKYRAKDGRDYELNLIDTPGHVDFAYEVSRSMAACEGAILVVDATQGVEAQTLANVYQALDHDLEIVPVINKIDLPSADVEGVRQEIEEVIGLDAKDAVPASAKEGIGIGEILEQIVHRVPAPEGDPDAPLKAIVFDSWYDSYRGVVMLVRVFEGTVRPKQKIRLWSNRKEFEVQELGVFAPFAKAVGELQAGEVGVVVANVKDVHDAKVGDTITDAARPTEEPFPGFKVVKPMVFSGVFPIEAADYEQLRDALEKLSLNDSAFTYEPETSQALGFGFRCGYLGLLHMEIVQERLEREYQLALITTAPSVVYRVTDTSGAVEEIDNPAKLPPVQKIAKLEEPHLTCHIHARTEDVGAILKLCQERRGLQRDLKYLGTKRVQITYDIPLAEVVFDFFDKLKSVSRGYASLDYELKGYEEADLVKLDILINGEPVDALSVIVHRERAYQRGRDLCQRLREVIPKQMYEVAIQAAIGAKVIARETVKAFRKNVLAKCYGGDISRKRKLLEKQKEGKKRMKQVGSVEIPQEAFLAVLKVEE</sequence>
<reference key="1">
    <citation type="submission" date="2008-08" db="EMBL/GenBank/DDBJ databases">
        <title>Complete sequence of Anaeromyxobacter sp. K.</title>
        <authorList>
            <consortium name="US DOE Joint Genome Institute"/>
            <person name="Lucas S."/>
            <person name="Copeland A."/>
            <person name="Lapidus A."/>
            <person name="Glavina del Rio T."/>
            <person name="Dalin E."/>
            <person name="Tice H."/>
            <person name="Bruce D."/>
            <person name="Goodwin L."/>
            <person name="Pitluck S."/>
            <person name="Saunders E."/>
            <person name="Brettin T."/>
            <person name="Detter J.C."/>
            <person name="Han C."/>
            <person name="Larimer F."/>
            <person name="Land M."/>
            <person name="Hauser L."/>
            <person name="Kyrpides N."/>
            <person name="Ovchinnikiva G."/>
            <person name="Beliaev A."/>
        </authorList>
    </citation>
    <scope>NUCLEOTIDE SEQUENCE [LARGE SCALE GENOMIC DNA]</scope>
    <source>
        <strain>K</strain>
    </source>
</reference>
<gene>
    <name evidence="1" type="primary">lepA</name>
    <name type="ordered locus">AnaeK_2246</name>
</gene>
<accession>B4UDQ7</accession>
<name>LEPA_ANASK</name>
<protein>
    <recommendedName>
        <fullName evidence="1">Elongation factor 4</fullName>
        <shortName evidence="1">EF-4</shortName>
        <ecNumber evidence="1">3.6.5.n1</ecNumber>
    </recommendedName>
    <alternativeName>
        <fullName evidence="1">Ribosomal back-translocase LepA</fullName>
    </alternativeName>
</protein>
<keyword id="KW-0997">Cell inner membrane</keyword>
<keyword id="KW-1003">Cell membrane</keyword>
<keyword id="KW-0342">GTP-binding</keyword>
<keyword id="KW-0378">Hydrolase</keyword>
<keyword id="KW-0472">Membrane</keyword>
<keyword id="KW-0547">Nucleotide-binding</keyword>
<keyword id="KW-0648">Protein biosynthesis</keyword>
<dbReference type="EC" id="3.6.5.n1" evidence="1"/>
<dbReference type="EMBL" id="CP001131">
    <property type="protein sequence ID" value="ACG73473.1"/>
    <property type="molecule type" value="Genomic_DNA"/>
</dbReference>
<dbReference type="RefSeq" id="WP_012526272.1">
    <property type="nucleotide sequence ID" value="NC_011145.1"/>
</dbReference>
<dbReference type="SMR" id="B4UDQ7"/>
<dbReference type="KEGG" id="ank:AnaeK_2246"/>
<dbReference type="HOGENOM" id="CLU_009995_3_3_7"/>
<dbReference type="OrthoDB" id="9760518at2"/>
<dbReference type="Proteomes" id="UP000001871">
    <property type="component" value="Chromosome"/>
</dbReference>
<dbReference type="GO" id="GO:0005886">
    <property type="term" value="C:plasma membrane"/>
    <property type="evidence" value="ECO:0007669"/>
    <property type="project" value="UniProtKB-SubCell"/>
</dbReference>
<dbReference type="GO" id="GO:0005525">
    <property type="term" value="F:GTP binding"/>
    <property type="evidence" value="ECO:0007669"/>
    <property type="project" value="UniProtKB-UniRule"/>
</dbReference>
<dbReference type="GO" id="GO:0003924">
    <property type="term" value="F:GTPase activity"/>
    <property type="evidence" value="ECO:0007669"/>
    <property type="project" value="UniProtKB-UniRule"/>
</dbReference>
<dbReference type="GO" id="GO:0043022">
    <property type="term" value="F:ribosome binding"/>
    <property type="evidence" value="ECO:0007669"/>
    <property type="project" value="UniProtKB-UniRule"/>
</dbReference>
<dbReference type="GO" id="GO:0003746">
    <property type="term" value="F:translation elongation factor activity"/>
    <property type="evidence" value="ECO:0007669"/>
    <property type="project" value="UniProtKB-UniRule"/>
</dbReference>
<dbReference type="GO" id="GO:0045727">
    <property type="term" value="P:positive regulation of translation"/>
    <property type="evidence" value="ECO:0007669"/>
    <property type="project" value="UniProtKB-UniRule"/>
</dbReference>
<dbReference type="CDD" id="cd03699">
    <property type="entry name" value="EF4_II"/>
    <property type="match status" value="1"/>
</dbReference>
<dbReference type="CDD" id="cd16260">
    <property type="entry name" value="EF4_III"/>
    <property type="match status" value="1"/>
</dbReference>
<dbReference type="CDD" id="cd01890">
    <property type="entry name" value="LepA"/>
    <property type="match status" value="1"/>
</dbReference>
<dbReference type="CDD" id="cd03709">
    <property type="entry name" value="lepA_C"/>
    <property type="match status" value="1"/>
</dbReference>
<dbReference type="FunFam" id="3.40.50.300:FF:000078">
    <property type="entry name" value="Elongation factor 4"/>
    <property type="match status" value="1"/>
</dbReference>
<dbReference type="FunFam" id="2.40.30.10:FF:000015">
    <property type="entry name" value="Translation factor GUF1, mitochondrial"/>
    <property type="match status" value="1"/>
</dbReference>
<dbReference type="FunFam" id="3.30.70.240:FF:000007">
    <property type="entry name" value="Translation factor GUF1, mitochondrial"/>
    <property type="match status" value="1"/>
</dbReference>
<dbReference type="FunFam" id="3.30.70.2570:FF:000001">
    <property type="entry name" value="Translation factor GUF1, mitochondrial"/>
    <property type="match status" value="1"/>
</dbReference>
<dbReference type="FunFam" id="3.30.70.870:FF:000004">
    <property type="entry name" value="Translation factor GUF1, mitochondrial"/>
    <property type="match status" value="1"/>
</dbReference>
<dbReference type="Gene3D" id="3.30.70.240">
    <property type="match status" value="1"/>
</dbReference>
<dbReference type="Gene3D" id="3.30.70.2570">
    <property type="entry name" value="Elongation factor 4, C-terminal domain"/>
    <property type="match status" value="1"/>
</dbReference>
<dbReference type="Gene3D" id="3.30.70.870">
    <property type="entry name" value="Elongation Factor G (Translational Gtpase), domain 3"/>
    <property type="match status" value="1"/>
</dbReference>
<dbReference type="Gene3D" id="3.40.50.300">
    <property type="entry name" value="P-loop containing nucleotide triphosphate hydrolases"/>
    <property type="match status" value="1"/>
</dbReference>
<dbReference type="Gene3D" id="2.40.30.10">
    <property type="entry name" value="Translation factors"/>
    <property type="match status" value="1"/>
</dbReference>
<dbReference type="HAMAP" id="MF_00071">
    <property type="entry name" value="LepA"/>
    <property type="match status" value="1"/>
</dbReference>
<dbReference type="InterPro" id="IPR006297">
    <property type="entry name" value="EF-4"/>
</dbReference>
<dbReference type="InterPro" id="IPR035647">
    <property type="entry name" value="EFG_III/V"/>
</dbReference>
<dbReference type="InterPro" id="IPR000640">
    <property type="entry name" value="EFG_V-like"/>
</dbReference>
<dbReference type="InterPro" id="IPR004161">
    <property type="entry name" value="EFTu-like_2"/>
</dbReference>
<dbReference type="InterPro" id="IPR031157">
    <property type="entry name" value="G_TR_CS"/>
</dbReference>
<dbReference type="InterPro" id="IPR038363">
    <property type="entry name" value="LepA_C_sf"/>
</dbReference>
<dbReference type="InterPro" id="IPR013842">
    <property type="entry name" value="LepA_CTD"/>
</dbReference>
<dbReference type="InterPro" id="IPR035654">
    <property type="entry name" value="LepA_IV"/>
</dbReference>
<dbReference type="InterPro" id="IPR027417">
    <property type="entry name" value="P-loop_NTPase"/>
</dbReference>
<dbReference type="InterPro" id="IPR005225">
    <property type="entry name" value="Small_GTP-bd"/>
</dbReference>
<dbReference type="InterPro" id="IPR000795">
    <property type="entry name" value="T_Tr_GTP-bd_dom"/>
</dbReference>
<dbReference type="InterPro" id="IPR009000">
    <property type="entry name" value="Transl_B-barrel_sf"/>
</dbReference>
<dbReference type="NCBIfam" id="TIGR01393">
    <property type="entry name" value="lepA"/>
    <property type="match status" value="1"/>
</dbReference>
<dbReference type="NCBIfam" id="TIGR00231">
    <property type="entry name" value="small_GTP"/>
    <property type="match status" value="1"/>
</dbReference>
<dbReference type="PANTHER" id="PTHR43512:SF4">
    <property type="entry name" value="TRANSLATION FACTOR GUF1 HOMOLOG, CHLOROPLASTIC"/>
    <property type="match status" value="1"/>
</dbReference>
<dbReference type="PANTHER" id="PTHR43512">
    <property type="entry name" value="TRANSLATION FACTOR GUF1-RELATED"/>
    <property type="match status" value="1"/>
</dbReference>
<dbReference type="Pfam" id="PF00679">
    <property type="entry name" value="EFG_C"/>
    <property type="match status" value="1"/>
</dbReference>
<dbReference type="Pfam" id="PF00009">
    <property type="entry name" value="GTP_EFTU"/>
    <property type="match status" value="1"/>
</dbReference>
<dbReference type="Pfam" id="PF03144">
    <property type="entry name" value="GTP_EFTU_D2"/>
    <property type="match status" value="1"/>
</dbReference>
<dbReference type="Pfam" id="PF06421">
    <property type="entry name" value="LepA_C"/>
    <property type="match status" value="1"/>
</dbReference>
<dbReference type="PRINTS" id="PR00315">
    <property type="entry name" value="ELONGATNFCT"/>
</dbReference>
<dbReference type="SUPFAM" id="SSF54980">
    <property type="entry name" value="EF-G C-terminal domain-like"/>
    <property type="match status" value="2"/>
</dbReference>
<dbReference type="SUPFAM" id="SSF52540">
    <property type="entry name" value="P-loop containing nucleoside triphosphate hydrolases"/>
    <property type="match status" value="1"/>
</dbReference>
<dbReference type="SUPFAM" id="SSF50447">
    <property type="entry name" value="Translation proteins"/>
    <property type="match status" value="1"/>
</dbReference>
<dbReference type="PROSITE" id="PS00301">
    <property type="entry name" value="G_TR_1"/>
    <property type="match status" value="1"/>
</dbReference>
<dbReference type="PROSITE" id="PS51722">
    <property type="entry name" value="G_TR_2"/>
    <property type="match status" value="1"/>
</dbReference>
<proteinExistence type="inferred from homology"/>